<feature type="chain" id="PRO_0000390850" description="Glyco-Gag protein">
    <location>
        <begin position="1"/>
        <end position="626"/>
    </location>
</feature>
<feature type="chain" id="PRO_5000061808" description="Nextended-MA-p12" evidence="2">
    <location>
        <begin position="1"/>
        <end status="unknown"/>
    </location>
</feature>
<feature type="chain" id="PRO_0000390851" description="CA-NC">
    <location>
        <begin status="unknown"/>
        <end position="626"/>
    </location>
</feature>
<feature type="transmembrane region" description="Helical" evidence="2">
    <location>
        <begin position="64"/>
        <end position="86"/>
    </location>
</feature>
<feature type="zinc finger region" description="CCHC-type" evidence="3">
    <location>
        <begin position="590"/>
        <end position="607"/>
    </location>
</feature>
<feature type="region of interest" description="Disordered" evidence="4">
    <location>
        <begin position="195"/>
        <end position="310"/>
    </location>
</feature>
<feature type="region of interest" description="Disordered" evidence="4">
    <location>
        <begin position="523"/>
        <end position="626"/>
    </location>
</feature>
<feature type="coiled-coil region" evidence="2">
    <location>
        <begin position="526"/>
        <end position="566"/>
    </location>
</feature>
<feature type="short sequence motif" description="PTAP/PSAP motif">
    <location>
        <begin position="199"/>
        <end position="202"/>
    </location>
</feature>
<feature type="short sequence motif" description="PPXY motif">
    <location>
        <begin position="250"/>
        <end position="253"/>
    </location>
</feature>
<feature type="short sequence motif" description="Cell attachment site" evidence="2">
    <location>
        <begin position="383"/>
        <end position="385"/>
    </location>
</feature>
<feature type="compositionally biased region" description="Pro residues" evidence="4">
    <location>
        <begin position="195"/>
        <end position="211"/>
    </location>
</feature>
<feature type="compositionally biased region" description="Basic and acidic residues" evidence="4">
    <location>
        <begin position="523"/>
        <end position="554"/>
    </location>
</feature>
<feature type="compositionally biased region" description="Basic and acidic residues" evidence="4">
    <location>
        <begin position="574"/>
        <end position="607"/>
    </location>
</feature>
<feature type="modified residue" description="Phosphoserine; by host" evidence="1">
    <location>
        <position position="280"/>
    </location>
</feature>
<feature type="glycosylation site" description="N-linked (GlcNAc...) asparagine; by host" evidence="2">
    <location>
        <position position="60"/>
    </location>
</feature>
<feature type="glycosylation site" description="N-linked (GlcNAc...) asparagine; by host" evidence="2">
    <location>
        <position position="113"/>
    </location>
</feature>
<feature type="glycosylation site" description="N-linked (GlcNAc...) asparagine; by host" evidence="2">
    <location>
        <position position="505"/>
    </location>
</feature>
<organism>
    <name type="scientific">Moloney murine leukemia virus (strain neuropathogenic variant ts1-92b)</name>
    <name type="common">MoMLV</name>
    <dbReference type="NCBI Taxonomy" id="882209"/>
    <lineage>
        <taxon>Viruses</taxon>
        <taxon>Riboviria</taxon>
        <taxon>Pararnavirae</taxon>
        <taxon>Artverviricota</taxon>
        <taxon>Revtraviricetes</taxon>
        <taxon>Ortervirales</taxon>
        <taxon>Retroviridae</taxon>
        <taxon>Orthoretrovirinae</taxon>
        <taxon>Gammaretrovirus</taxon>
        <taxon>Murine leukemia virus</taxon>
    </lineage>
</organism>
<dbReference type="EMBL" id="AF462057">
    <property type="protein sequence ID" value="AAL69908.1"/>
    <property type="status" value="ALT_SEQ"/>
    <property type="molecule type" value="Genomic_DNA"/>
</dbReference>
<dbReference type="PIR" id="S02769">
    <property type="entry name" value="S02769"/>
</dbReference>
<dbReference type="BMRB" id="Q8UN02"/>
<dbReference type="SMR" id="Q8UN02"/>
<dbReference type="GlyCosmos" id="Q8UN02">
    <property type="glycosylation" value="3 sites, No reported glycans"/>
</dbReference>
<dbReference type="SwissPalm" id="Q8UN02"/>
<dbReference type="Proteomes" id="UP000132193">
    <property type="component" value="Genome"/>
</dbReference>
<dbReference type="GO" id="GO:0005576">
    <property type="term" value="C:extracellular region"/>
    <property type="evidence" value="ECO:0007669"/>
    <property type="project" value="UniProtKB-SubCell"/>
</dbReference>
<dbReference type="GO" id="GO:0020002">
    <property type="term" value="C:host cell plasma membrane"/>
    <property type="evidence" value="ECO:0007669"/>
    <property type="project" value="UniProtKB-SubCell"/>
</dbReference>
<dbReference type="GO" id="GO:0016020">
    <property type="term" value="C:membrane"/>
    <property type="evidence" value="ECO:0007669"/>
    <property type="project" value="UniProtKB-KW"/>
</dbReference>
<dbReference type="GO" id="GO:0003676">
    <property type="term" value="F:nucleic acid binding"/>
    <property type="evidence" value="ECO:0007669"/>
    <property type="project" value="InterPro"/>
</dbReference>
<dbReference type="GO" id="GO:0008270">
    <property type="term" value="F:zinc ion binding"/>
    <property type="evidence" value="ECO:0007669"/>
    <property type="project" value="UniProtKB-KW"/>
</dbReference>
<dbReference type="GO" id="GO:0019068">
    <property type="term" value="P:virion assembly"/>
    <property type="evidence" value="ECO:0007669"/>
    <property type="project" value="InterPro"/>
</dbReference>
<dbReference type="FunFam" id="1.10.150.180:FF:000001">
    <property type="entry name" value="Gag polyprotein"/>
    <property type="match status" value="1"/>
</dbReference>
<dbReference type="Gene3D" id="1.10.150.180">
    <property type="entry name" value="Gamma-retroviral matrix domain"/>
    <property type="match status" value="1"/>
</dbReference>
<dbReference type="Gene3D" id="1.10.375.10">
    <property type="entry name" value="Human Immunodeficiency Virus Type 1 Capsid Protein"/>
    <property type="match status" value="1"/>
</dbReference>
<dbReference type="Gene3D" id="4.10.60.10">
    <property type="entry name" value="Zinc finger, CCHC-type"/>
    <property type="match status" value="1"/>
</dbReference>
<dbReference type="InterPro" id="IPR000840">
    <property type="entry name" value="G_retro_matrix"/>
</dbReference>
<dbReference type="InterPro" id="IPR036946">
    <property type="entry name" value="G_retro_matrix_sf"/>
</dbReference>
<dbReference type="InterPro" id="IPR002079">
    <property type="entry name" value="Gag_p12"/>
</dbReference>
<dbReference type="InterPro" id="IPR003036">
    <property type="entry name" value="Gag_P30"/>
</dbReference>
<dbReference type="InterPro" id="IPR008919">
    <property type="entry name" value="Retrov_capsid_N"/>
</dbReference>
<dbReference type="InterPro" id="IPR050462">
    <property type="entry name" value="Retroviral_Gag-Pol_poly"/>
</dbReference>
<dbReference type="InterPro" id="IPR010999">
    <property type="entry name" value="Retrovr_matrix"/>
</dbReference>
<dbReference type="InterPro" id="IPR001878">
    <property type="entry name" value="Znf_CCHC"/>
</dbReference>
<dbReference type="InterPro" id="IPR036875">
    <property type="entry name" value="Znf_CCHC_sf"/>
</dbReference>
<dbReference type="PANTHER" id="PTHR33166">
    <property type="entry name" value="GAG_P30 DOMAIN-CONTAINING PROTEIN"/>
    <property type="match status" value="1"/>
</dbReference>
<dbReference type="Pfam" id="PF01140">
    <property type="entry name" value="Gag_MA"/>
    <property type="match status" value="1"/>
</dbReference>
<dbReference type="Pfam" id="PF01141">
    <property type="entry name" value="Gag_p12"/>
    <property type="match status" value="1"/>
</dbReference>
<dbReference type="Pfam" id="PF02093">
    <property type="entry name" value="Gag_p30"/>
    <property type="match status" value="1"/>
</dbReference>
<dbReference type="Pfam" id="PF00098">
    <property type="entry name" value="zf-CCHC"/>
    <property type="match status" value="1"/>
</dbReference>
<dbReference type="SMART" id="SM00343">
    <property type="entry name" value="ZnF_C2HC"/>
    <property type="match status" value="1"/>
</dbReference>
<dbReference type="SUPFAM" id="SSF47836">
    <property type="entry name" value="Retroviral matrix proteins"/>
    <property type="match status" value="1"/>
</dbReference>
<dbReference type="SUPFAM" id="SSF47943">
    <property type="entry name" value="Retrovirus capsid protein, N-terminal core domain"/>
    <property type="match status" value="1"/>
</dbReference>
<dbReference type="SUPFAM" id="SSF57756">
    <property type="entry name" value="Retrovirus zinc finger-like domains"/>
    <property type="match status" value="1"/>
</dbReference>
<dbReference type="PROSITE" id="PS50158">
    <property type="entry name" value="ZF_CCHC"/>
    <property type="match status" value="1"/>
</dbReference>
<sequence>LGDVPGTSGAVFVARPESKNPDRFGLFGAPPLEEGYVVLVGDENLKQFPPPSEFLLSVWNRSRAARLVCCSIVLCCLCLTVFLYLSENMGQTVTTPLSLTLDHWKDVERIAHNQSVDVKKRRWVTFCSAEWPTFNVGWPRDGTFNRDLITQVKIKVFSPGPHGHPDQVPYIVTWEALAFDPPPWAKPFVHPKPPPPLPPSAPSLPLEPPLSTPSRSSLYPALTPSLGAKPKPQVLSDSEGPLIDLLTEDPPPYRDPRPPPSDGDGNSGEATPAGEAPDPSPMASRLRGRREPPVADSTTSQAFPLRTGGNGQLQYWPFSSSDLYNWKNNNPSFSEDPGKLTALIESVLITHQPTWDDCQQLLGTLLTGEEKQRVLLEARKAVRGDDGRPTQLPNEVDAAFPLERPDWEYTTQAGRNHLVQYRQLLLAGLQNAGRSPTNLAKVKGITQGPNESPSAFLERLKEAYRRYTPYDPEDPGQETNVAMSFIWQSAPDIGRKLERLEDLKNKTLGDLVREAERIFNKRETPEEREERIRRETEEKEERRRTEDEQKEKERDRRRHREMSKLLATVVSGQRQDRQGGERRRSQLDRDQCAYCKEKGHWAKDCPKKPRGPRGPRPQTSLLTLDD</sequence>
<accession>Q8UN02</accession>
<evidence type="ECO:0000250" key="1"/>
<evidence type="ECO:0000255" key="2"/>
<evidence type="ECO:0000255" key="3">
    <source>
        <dbReference type="PROSITE-ProRule" id="PRU00047"/>
    </source>
</evidence>
<evidence type="ECO:0000256" key="4">
    <source>
        <dbReference type="SAM" id="MobiDB-lite"/>
    </source>
</evidence>
<evidence type="ECO:0000269" key="5">
    <source>
    </source>
</evidence>
<evidence type="ECO:0000269" key="6">
    <source>
    </source>
</evidence>
<evidence type="ECO:0000305" key="7"/>
<evidence type="ECO:0000305" key="8">
    <source>
    </source>
</evidence>
<proteinExistence type="inferred from homology"/>
<organismHost>
    <name type="scientific">Mus musculus</name>
    <name type="common">Mouse</name>
    <dbReference type="NCBI Taxonomy" id="10090"/>
</organismHost>
<comment type="function">
    <text evidence="5 6">Seems to be important for efficient replication in vivo.</text>
</comment>
<comment type="subcellular location">
    <molecule>Nextended-MA-p12</molecule>
    <subcellularLocation>
        <location evidence="7">Host cell membrane</location>
        <topology evidence="7">Single-pass type II membrane protein</topology>
    </subcellularLocation>
</comment>
<comment type="subcellular location">
    <molecule>CA-NC</molecule>
    <subcellularLocation>
        <location evidence="7">Secreted</location>
    </subcellularLocation>
</comment>
<comment type="alternative products">
    <event type="alternative initiation"/>
    <isoform>
        <id>Q8UN02-1</id>
        <name>Pr80gag</name>
        <name>GlycoGag</name>
        <sequence type="displayed"/>
    </isoform>
    <isoform>
        <id>Q8UN02-2</id>
        <name>Pr65gag</name>
        <sequence type="not described"/>
    </isoform>
</comment>
<comment type="PTM">
    <text evidence="7">May be cleaved within the capsid domain.</text>
</comment>
<comment type="miscellaneous">
    <molecule>Isoform Pr80gag</molecule>
    <text evidence="7">Produced by an upstream CUG initiation codon.</text>
</comment>
<comment type="sequence caution" evidence="8">
    <conflict type="miscellaneous discrepancy">
        <sequence resource="EMBL-CDS" id="AAL69908"/>
    </conflict>
</comment>
<protein>
    <recommendedName>
        <fullName>Glyco-Gag protein</fullName>
    </recommendedName>
    <alternativeName>
        <fullName>Gross cell surface antigen</fullName>
    </alternativeName>
    <alternativeName>
        <fullName>glycosylated Pr80 gag</fullName>
        <shortName>gPr80 Gag</shortName>
        <shortName>gag-gPr80</shortName>
    </alternativeName>
    <component>
        <recommendedName>
            <fullName>Nextended-MA-p12</fullName>
        </recommendedName>
    </component>
    <component>
        <recommendedName>
            <fullName>CA-NC</fullName>
        </recommendedName>
    </component>
</protein>
<gene>
    <name type="primary">gag</name>
</gene>
<keyword id="KW-0024">Alternative initiation</keyword>
<keyword id="KW-0175">Coiled coil</keyword>
<keyword id="KW-0325">Glycoprotein</keyword>
<keyword id="KW-1032">Host cell membrane</keyword>
<keyword id="KW-1043">Host membrane</keyword>
<keyword id="KW-0472">Membrane</keyword>
<keyword id="KW-0479">Metal-binding</keyword>
<keyword id="KW-0597">Phosphoprotein</keyword>
<keyword id="KW-0964">Secreted</keyword>
<keyword id="KW-0812">Transmembrane</keyword>
<keyword id="KW-1133">Transmembrane helix</keyword>
<keyword id="KW-0862">Zinc</keyword>
<keyword id="KW-0863">Zinc-finger</keyword>
<name>GGAG_MLVMN</name>
<reference key="1">
    <citation type="journal article" date="2002" name="Virus Genes">
        <title>Sequence analysis of a neuropathogenic variant of Moloney murine leukemia virus ts1: evidence for recombination.</title>
        <authorList>
            <person name="Szurek P.F."/>
            <person name="Vann J.M."/>
            <person name="Brooks B.R."/>
        </authorList>
    </citation>
    <scope>NUCLEOTIDE SEQUENCE [GENOMIC DNA]</scope>
</reference>
<reference key="2">
    <citation type="journal article" date="1989" name="J. Mol. Biol.">
        <title>CUG initiation codon used for the synthesis of a cell surface antigen coded by the murine leukemia virus.</title>
        <authorList>
            <person name="Prats A.C."/>
            <person name="De Billy G."/>
            <person name="Wang P."/>
            <person name="Darlix J.L."/>
        </authorList>
    </citation>
    <scope>FUNCTION</scope>
    <scope>INITIATION ON LEUCINE</scope>
</reference>
<reference key="3">
    <citation type="journal article" date="2007" name="J. Virol.">
        <title>Mutation in the glycosylated gag protein of murine leukemia virus results in reduced in vivo infectivity and a novel defect in viral budding or release.</title>
        <authorList>
            <person name="Low A."/>
            <person name="Datta S."/>
            <person name="Kuznetsov Y."/>
            <person name="Jahid S."/>
            <person name="Kothari N."/>
            <person name="McPherson A."/>
            <person name="Fan H."/>
        </authorList>
    </citation>
    <scope>FUNCTION</scope>
</reference>